<dbReference type="EC" id="2.4.99.17" evidence="1"/>
<dbReference type="EMBL" id="Y15896">
    <property type="protein sequence ID" value="CAB75332.1"/>
    <property type="molecule type" value="Genomic_DNA"/>
</dbReference>
<dbReference type="EMBL" id="AL009126">
    <property type="protein sequence ID" value="CAB14732.1"/>
    <property type="molecule type" value="Genomic_DNA"/>
</dbReference>
<dbReference type="PIR" id="A69688">
    <property type="entry name" value="A69688"/>
</dbReference>
<dbReference type="RefSeq" id="NP_390650.1">
    <property type="nucleotide sequence ID" value="NC_000964.3"/>
</dbReference>
<dbReference type="RefSeq" id="WP_003229723.1">
    <property type="nucleotide sequence ID" value="NZ_OZ025638.1"/>
</dbReference>
<dbReference type="PDB" id="1YY3">
    <property type="method" value="X-ray"/>
    <property type="resolution" value="2.88 A"/>
    <property type="chains" value="A/B=2-342"/>
</dbReference>
<dbReference type="PDBsum" id="1YY3"/>
<dbReference type="SMR" id="O32054"/>
<dbReference type="FunCoup" id="O32054">
    <property type="interactions" value="455"/>
</dbReference>
<dbReference type="STRING" id="224308.BSU27720"/>
<dbReference type="PaxDb" id="224308-BSU27720"/>
<dbReference type="EnsemblBacteria" id="CAB14732">
    <property type="protein sequence ID" value="CAB14732"/>
    <property type="gene ID" value="BSU_27720"/>
</dbReference>
<dbReference type="GeneID" id="937975"/>
<dbReference type="KEGG" id="bsu:BSU27720"/>
<dbReference type="PATRIC" id="fig|224308.179.peg.3011"/>
<dbReference type="eggNOG" id="COG0809">
    <property type="taxonomic scope" value="Bacteria"/>
</dbReference>
<dbReference type="InParanoid" id="O32054"/>
<dbReference type="OrthoDB" id="9805933at2"/>
<dbReference type="PhylomeDB" id="O32054"/>
<dbReference type="BioCyc" id="BSUB:BSU27720-MONOMER"/>
<dbReference type="BRENDA" id="2.4.99.17">
    <property type="organism ID" value="658"/>
</dbReference>
<dbReference type="UniPathway" id="UPA00392"/>
<dbReference type="EvolutionaryTrace" id="O32054"/>
<dbReference type="Proteomes" id="UP000001570">
    <property type="component" value="Chromosome"/>
</dbReference>
<dbReference type="GO" id="GO:0005737">
    <property type="term" value="C:cytoplasm"/>
    <property type="evidence" value="ECO:0007669"/>
    <property type="project" value="UniProtKB-SubCell"/>
</dbReference>
<dbReference type="GO" id="GO:0051075">
    <property type="term" value="F:S-adenosylmethionine:tRNA ribosyltransferase-isomerase activity"/>
    <property type="evidence" value="ECO:0000318"/>
    <property type="project" value="GO_Central"/>
</dbReference>
<dbReference type="GO" id="GO:0008616">
    <property type="term" value="P:queuosine biosynthetic process"/>
    <property type="evidence" value="ECO:0000318"/>
    <property type="project" value="GO_Central"/>
</dbReference>
<dbReference type="GO" id="GO:0002099">
    <property type="term" value="P:tRNA wobble guanine modification"/>
    <property type="evidence" value="ECO:0000318"/>
    <property type="project" value="GO_Central"/>
</dbReference>
<dbReference type="FunFam" id="2.40.10.240:FF:000002">
    <property type="entry name" value="S-adenosylmethionine:tRNA ribosyltransferase-isomerase"/>
    <property type="match status" value="1"/>
</dbReference>
<dbReference type="FunFam" id="3.40.1780.10:FF:000001">
    <property type="entry name" value="S-adenosylmethionine:tRNA ribosyltransferase-isomerase"/>
    <property type="match status" value="1"/>
</dbReference>
<dbReference type="Gene3D" id="2.40.10.240">
    <property type="entry name" value="QueA-like"/>
    <property type="match status" value="1"/>
</dbReference>
<dbReference type="Gene3D" id="3.40.1780.10">
    <property type="entry name" value="QueA-like"/>
    <property type="match status" value="1"/>
</dbReference>
<dbReference type="HAMAP" id="MF_00113">
    <property type="entry name" value="QueA"/>
    <property type="match status" value="1"/>
</dbReference>
<dbReference type="InterPro" id="IPR003699">
    <property type="entry name" value="QueA"/>
</dbReference>
<dbReference type="InterPro" id="IPR042118">
    <property type="entry name" value="QueA_dom1"/>
</dbReference>
<dbReference type="InterPro" id="IPR042119">
    <property type="entry name" value="QueA_dom2"/>
</dbReference>
<dbReference type="InterPro" id="IPR036100">
    <property type="entry name" value="QueA_sf"/>
</dbReference>
<dbReference type="NCBIfam" id="NF001140">
    <property type="entry name" value="PRK00147.1"/>
    <property type="match status" value="1"/>
</dbReference>
<dbReference type="NCBIfam" id="TIGR00113">
    <property type="entry name" value="queA"/>
    <property type="match status" value="1"/>
</dbReference>
<dbReference type="PANTHER" id="PTHR30307">
    <property type="entry name" value="S-ADENOSYLMETHIONINE:TRNA RIBOSYLTRANSFERASE-ISOMERASE"/>
    <property type="match status" value="1"/>
</dbReference>
<dbReference type="PANTHER" id="PTHR30307:SF0">
    <property type="entry name" value="S-ADENOSYLMETHIONINE:TRNA RIBOSYLTRANSFERASE-ISOMERASE"/>
    <property type="match status" value="1"/>
</dbReference>
<dbReference type="Pfam" id="PF02547">
    <property type="entry name" value="Queuosine_synth"/>
    <property type="match status" value="1"/>
</dbReference>
<dbReference type="SUPFAM" id="SSF111337">
    <property type="entry name" value="QueA-like"/>
    <property type="match status" value="1"/>
</dbReference>
<proteinExistence type="evidence at protein level"/>
<keyword id="KW-0002">3D-structure</keyword>
<keyword id="KW-0963">Cytoplasm</keyword>
<keyword id="KW-0671">Queuosine biosynthesis</keyword>
<keyword id="KW-1185">Reference proteome</keyword>
<keyword id="KW-0949">S-adenosyl-L-methionine</keyword>
<keyword id="KW-0808">Transferase</keyword>
<feature type="chain" id="PRO_0000165380" description="S-adenosylmethionine:tRNA ribosyltransferase-isomerase">
    <location>
        <begin position="1"/>
        <end position="342"/>
    </location>
</feature>
<feature type="turn" evidence="2">
    <location>
        <begin position="12"/>
        <end position="14"/>
    </location>
</feature>
<feature type="strand" evidence="2">
    <location>
        <begin position="26"/>
        <end position="30"/>
    </location>
</feature>
<feature type="turn" evidence="2">
    <location>
        <begin position="33"/>
        <end position="35"/>
    </location>
</feature>
<feature type="helix" evidence="2">
    <location>
        <begin position="45"/>
        <end position="49"/>
    </location>
</feature>
<feature type="strand" evidence="2">
    <location>
        <begin position="54"/>
        <end position="58"/>
    </location>
</feature>
<feature type="strand" evidence="2">
    <location>
        <begin position="66"/>
        <end position="76"/>
    </location>
</feature>
<feature type="strand" evidence="2">
    <location>
        <begin position="79"/>
        <end position="86"/>
    </location>
</feature>
<feature type="strand" evidence="2">
    <location>
        <begin position="91"/>
        <end position="96"/>
    </location>
</feature>
<feature type="helix" evidence="2">
    <location>
        <begin position="99"/>
        <end position="101"/>
    </location>
</feature>
<feature type="strand" evidence="2">
    <location>
        <begin position="107"/>
        <end position="109"/>
    </location>
</feature>
<feature type="strand" evidence="2">
    <location>
        <begin position="113"/>
        <end position="122"/>
    </location>
</feature>
<feature type="strand" evidence="2">
    <location>
        <begin position="128"/>
        <end position="133"/>
    </location>
</feature>
<feature type="helix" evidence="2">
    <location>
        <begin position="138"/>
        <end position="146"/>
    </location>
</feature>
<feature type="helix" evidence="2">
    <location>
        <begin position="152"/>
        <end position="155"/>
    </location>
</feature>
<feature type="strand" evidence="2">
    <location>
        <begin position="158"/>
        <end position="160"/>
    </location>
</feature>
<feature type="helix" evidence="2">
    <location>
        <begin position="186"/>
        <end position="195"/>
    </location>
</feature>
<feature type="strand" evidence="2">
    <location>
        <begin position="197"/>
        <end position="201"/>
    </location>
</feature>
<feature type="strand" evidence="2">
    <location>
        <begin position="203"/>
        <end position="206"/>
    </location>
</feature>
<feature type="helix" evidence="2">
    <location>
        <begin position="207"/>
        <end position="211"/>
    </location>
</feature>
<feature type="strand" evidence="2">
    <location>
        <begin position="227"/>
        <end position="231"/>
    </location>
</feature>
<feature type="helix" evidence="2">
    <location>
        <begin position="233"/>
        <end position="244"/>
    </location>
</feature>
<feature type="strand" evidence="2">
    <location>
        <begin position="249"/>
        <end position="252"/>
    </location>
</feature>
<feature type="turn" evidence="2">
    <location>
        <begin position="254"/>
        <end position="256"/>
    </location>
</feature>
<feature type="helix" evidence="2">
    <location>
        <begin position="257"/>
        <end position="265"/>
    </location>
</feature>
<feature type="turn" evidence="2">
    <location>
        <begin position="266"/>
        <end position="268"/>
    </location>
</feature>
<feature type="strand" evidence="2">
    <location>
        <begin position="274"/>
        <end position="278"/>
    </location>
</feature>
<feature type="strand" evidence="2">
    <location>
        <begin position="292"/>
        <end position="297"/>
    </location>
</feature>
<feature type="helix" evidence="2">
    <location>
        <begin position="305"/>
        <end position="313"/>
    </location>
</feature>
<feature type="helix" evidence="2">
    <location>
        <begin position="315"/>
        <end position="327"/>
    </location>
</feature>
<feature type="strand" evidence="2">
    <location>
        <begin position="332"/>
        <end position="336"/>
    </location>
</feature>
<feature type="strand" evidence="2">
    <location>
        <begin position="338"/>
        <end position="340"/>
    </location>
</feature>
<evidence type="ECO:0000255" key="1">
    <source>
        <dbReference type="HAMAP-Rule" id="MF_00113"/>
    </source>
</evidence>
<evidence type="ECO:0007829" key="2">
    <source>
        <dbReference type="PDB" id="1YY3"/>
    </source>
</evidence>
<sequence>MKVDLFDFELPERLIAQVPLEQRDASRLMVLDKHTGELTDSSFKHIISFFNEGDCLVLNNTRVLPARLFGTKEDTGAKVELLLLKQETGDKWETLAKPAKRVKKGTVVTFGDGRLKAICTEELEHGGRKMEFQYDGIFYEVLESLGEMPLPPYIKEQLDDKERYQTVYSKEIGSAAAPTAGLHFTEEILQQLKDKGVQIEFITLHVGLGTFRPVSADEVEEHNMHAEFYQMSEETAAALNKVRENGGRIISVGTTSTRTLETIAGEHDGQFKASSGWTSIFIYPGYEFKAIDGMITNFHLPKSSLIMLVSALAGRENILRAYNHAVEEEYRFFSFGDAMLII</sequence>
<reference key="1">
    <citation type="submission" date="1997-12" db="EMBL/GenBank/DDBJ databases">
        <title>A 17.8 kb segment in the spoVB-nadC region of the Bacillus subtilis 168 chromosome: sequencing and ruv operon identification.</title>
        <authorList>
            <person name="Tosato V."/>
            <person name="Bolotin A."/>
            <person name="Bertani I."/>
            <person name="Valentino I."/>
            <person name="Bruschi C.V."/>
        </authorList>
    </citation>
    <scope>NUCLEOTIDE SEQUENCE [GENOMIC DNA]</scope>
    <source>
        <strain>168</strain>
    </source>
</reference>
<reference key="2">
    <citation type="journal article" date="1997" name="Nature">
        <title>The complete genome sequence of the Gram-positive bacterium Bacillus subtilis.</title>
        <authorList>
            <person name="Kunst F."/>
            <person name="Ogasawara N."/>
            <person name="Moszer I."/>
            <person name="Albertini A.M."/>
            <person name="Alloni G."/>
            <person name="Azevedo V."/>
            <person name="Bertero M.G."/>
            <person name="Bessieres P."/>
            <person name="Bolotin A."/>
            <person name="Borchert S."/>
            <person name="Borriss R."/>
            <person name="Boursier L."/>
            <person name="Brans A."/>
            <person name="Braun M."/>
            <person name="Brignell S.C."/>
            <person name="Bron S."/>
            <person name="Brouillet S."/>
            <person name="Bruschi C.V."/>
            <person name="Caldwell B."/>
            <person name="Capuano V."/>
            <person name="Carter N.M."/>
            <person name="Choi S.-K."/>
            <person name="Codani J.-J."/>
            <person name="Connerton I.F."/>
            <person name="Cummings N.J."/>
            <person name="Daniel R.A."/>
            <person name="Denizot F."/>
            <person name="Devine K.M."/>
            <person name="Duesterhoeft A."/>
            <person name="Ehrlich S.D."/>
            <person name="Emmerson P.T."/>
            <person name="Entian K.-D."/>
            <person name="Errington J."/>
            <person name="Fabret C."/>
            <person name="Ferrari E."/>
            <person name="Foulger D."/>
            <person name="Fritz C."/>
            <person name="Fujita M."/>
            <person name="Fujita Y."/>
            <person name="Fuma S."/>
            <person name="Galizzi A."/>
            <person name="Galleron N."/>
            <person name="Ghim S.-Y."/>
            <person name="Glaser P."/>
            <person name="Goffeau A."/>
            <person name="Golightly E.J."/>
            <person name="Grandi G."/>
            <person name="Guiseppi G."/>
            <person name="Guy B.J."/>
            <person name="Haga K."/>
            <person name="Haiech J."/>
            <person name="Harwood C.R."/>
            <person name="Henaut A."/>
            <person name="Hilbert H."/>
            <person name="Holsappel S."/>
            <person name="Hosono S."/>
            <person name="Hullo M.-F."/>
            <person name="Itaya M."/>
            <person name="Jones L.-M."/>
            <person name="Joris B."/>
            <person name="Karamata D."/>
            <person name="Kasahara Y."/>
            <person name="Klaerr-Blanchard M."/>
            <person name="Klein C."/>
            <person name="Kobayashi Y."/>
            <person name="Koetter P."/>
            <person name="Koningstein G."/>
            <person name="Krogh S."/>
            <person name="Kumano M."/>
            <person name="Kurita K."/>
            <person name="Lapidus A."/>
            <person name="Lardinois S."/>
            <person name="Lauber J."/>
            <person name="Lazarevic V."/>
            <person name="Lee S.-M."/>
            <person name="Levine A."/>
            <person name="Liu H."/>
            <person name="Masuda S."/>
            <person name="Mauel C."/>
            <person name="Medigue C."/>
            <person name="Medina N."/>
            <person name="Mellado R.P."/>
            <person name="Mizuno M."/>
            <person name="Moestl D."/>
            <person name="Nakai S."/>
            <person name="Noback M."/>
            <person name="Noone D."/>
            <person name="O'Reilly M."/>
            <person name="Ogawa K."/>
            <person name="Ogiwara A."/>
            <person name="Oudega B."/>
            <person name="Park S.-H."/>
            <person name="Parro V."/>
            <person name="Pohl T.M."/>
            <person name="Portetelle D."/>
            <person name="Porwollik S."/>
            <person name="Prescott A.M."/>
            <person name="Presecan E."/>
            <person name="Pujic P."/>
            <person name="Purnelle B."/>
            <person name="Rapoport G."/>
            <person name="Rey M."/>
            <person name="Reynolds S."/>
            <person name="Rieger M."/>
            <person name="Rivolta C."/>
            <person name="Rocha E."/>
            <person name="Roche B."/>
            <person name="Rose M."/>
            <person name="Sadaie Y."/>
            <person name="Sato T."/>
            <person name="Scanlan E."/>
            <person name="Schleich S."/>
            <person name="Schroeter R."/>
            <person name="Scoffone F."/>
            <person name="Sekiguchi J."/>
            <person name="Sekowska A."/>
            <person name="Seror S.J."/>
            <person name="Serror P."/>
            <person name="Shin B.-S."/>
            <person name="Soldo B."/>
            <person name="Sorokin A."/>
            <person name="Tacconi E."/>
            <person name="Takagi T."/>
            <person name="Takahashi H."/>
            <person name="Takemaru K."/>
            <person name="Takeuchi M."/>
            <person name="Tamakoshi A."/>
            <person name="Tanaka T."/>
            <person name="Terpstra P."/>
            <person name="Tognoni A."/>
            <person name="Tosato V."/>
            <person name="Uchiyama S."/>
            <person name="Vandenbol M."/>
            <person name="Vannier F."/>
            <person name="Vassarotti A."/>
            <person name="Viari A."/>
            <person name="Wambutt R."/>
            <person name="Wedler E."/>
            <person name="Wedler H."/>
            <person name="Weitzenegger T."/>
            <person name="Winters P."/>
            <person name="Wipat A."/>
            <person name="Yamamoto H."/>
            <person name="Yamane K."/>
            <person name="Yasumoto K."/>
            <person name="Yata K."/>
            <person name="Yoshida K."/>
            <person name="Yoshikawa H.-F."/>
            <person name="Zumstein E."/>
            <person name="Yoshikawa H."/>
            <person name="Danchin A."/>
        </authorList>
    </citation>
    <scope>NUCLEOTIDE SEQUENCE [LARGE SCALE GENOMIC DNA]</scope>
    <source>
        <strain>168</strain>
    </source>
</reference>
<name>QUEA_BACSU</name>
<accession>O32054</accession>
<comment type="function">
    <text evidence="1">Transfers and isomerizes the ribose moiety from AdoMet to the 7-aminomethyl group of 7-deazaguanine (preQ1-tRNA) to give epoxyqueuosine (oQ-tRNA).</text>
</comment>
<comment type="catalytic activity">
    <reaction evidence="1">
        <text>7-aminomethyl-7-carbaguanosine(34) in tRNA + S-adenosyl-L-methionine = epoxyqueuosine(34) in tRNA + adenine + L-methionine + 2 H(+)</text>
        <dbReference type="Rhea" id="RHEA:32155"/>
        <dbReference type="Rhea" id="RHEA-COMP:10342"/>
        <dbReference type="Rhea" id="RHEA-COMP:18582"/>
        <dbReference type="ChEBI" id="CHEBI:15378"/>
        <dbReference type="ChEBI" id="CHEBI:16708"/>
        <dbReference type="ChEBI" id="CHEBI:57844"/>
        <dbReference type="ChEBI" id="CHEBI:59789"/>
        <dbReference type="ChEBI" id="CHEBI:82833"/>
        <dbReference type="ChEBI" id="CHEBI:194443"/>
        <dbReference type="EC" id="2.4.99.17"/>
    </reaction>
</comment>
<comment type="pathway">
    <text evidence="1">tRNA modification; tRNA-queuosine biosynthesis.</text>
</comment>
<comment type="subunit">
    <text evidence="1">Monomer.</text>
</comment>
<comment type="subcellular location">
    <subcellularLocation>
        <location evidence="1">Cytoplasm</location>
    </subcellularLocation>
</comment>
<comment type="similarity">
    <text evidence="1">Belongs to the QueA family.</text>
</comment>
<organism>
    <name type="scientific">Bacillus subtilis (strain 168)</name>
    <dbReference type="NCBI Taxonomy" id="224308"/>
    <lineage>
        <taxon>Bacteria</taxon>
        <taxon>Bacillati</taxon>
        <taxon>Bacillota</taxon>
        <taxon>Bacilli</taxon>
        <taxon>Bacillales</taxon>
        <taxon>Bacillaceae</taxon>
        <taxon>Bacillus</taxon>
    </lineage>
</organism>
<gene>
    <name evidence="1" type="primary">queA</name>
    <name type="ordered locus">BSU27720</name>
</gene>
<protein>
    <recommendedName>
        <fullName evidence="1">S-adenosylmethionine:tRNA ribosyltransferase-isomerase</fullName>
        <ecNumber evidence="1">2.4.99.17</ecNumber>
    </recommendedName>
    <alternativeName>
        <fullName evidence="1">Queuosine biosynthesis protein QueA</fullName>
    </alternativeName>
</protein>